<keyword id="KW-0002">3D-structure</keyword>
<keyword id="KW-0067">ATP-binding</keyword>
<keyword id="KW-0963">Cytoplasm</keyword>
<keyword id="KW-0547">Nucleotide-binding</keyword>
<keyword id="KW-1185">Reference proteome</keyword>
<keyword id="KW-0694">RNA-binding</keyword>
<keyword id="KW-0784">Thiamine biosynthesis</keyword>
<keyword id="KW-0808">Transferase</keyword>
<keyword id="KW-0820">tRNA-binding</keyword>
<proteinExistence type="evidence at protein level"/>
<protein>
    <recommendedName>
        <fullName>Probable tRNA sulfurtransferase</fullName>
        <ecNumber>2.8.1.4</ecNumber>
    </recommendedName>
    <alternativeName>
        <fullName>Sulfur carrier protein ThiS sulfurtransferase</fullName>
    </alternativeName>
    <alternativeName>
        <fullName>Thiamine biosynthesis protein ThiI</fullName>
    </alternativeName>
    <alternativeName>
        <fullName>tRNA 4-thiouridine synthase</fullName>
    </alternativeName>
</protein>
<dbReference type="EC" id="2.8.1.4"/>
<dbReference type="EMBL" id="AE016879">
    <property type="protein sequence ID" value="AAP28584.1"/>
    <property type="molecule type" value="Genomic_DNA"/>
</dbReference>
<dbReference type="EMBL" id="AE017334">
    <property type="protein sequence ID" value="AAT34017.2"/>
    <property type="molecule type" value="Genomic_DNA"/>
</dbReference>
<dbReference type="EMBL" id="AE017225">
    <property type="protein sequence ID" value="AAT56842.1"/>
    <property type="status" value="ALT_INIT"/>
    <property type="molecule type" value="Genomic_DNA"/>
</dbReference>
<dbReference type="RefSeq" id="NP_847098.1">
    <property type="nucleotide sequence ID" value="NC_003997.3"/>
</dbReference>
<dbReference type="RefSeq" id="YP_030792.1">
    <property type="nucleotide sequence ID" value="NC_005945.1"/>
</dbReference>
<dbReference type="PDB" id="2C5S">
    <property type="method" value="X-ray"/>
    <property type="resolution" value="2.50 A"/>
    <property type="chains" value="A=1-403"/>
</dbReference>
<dbReference type="PDBsum" id="2C5S"/>
<dbReference type="SMR" id="Q81KU0"/>
<dbReference type="STRING" id="261594.GBAA_4899"/>
<dbReference type="DNASU" id="1087273"/>
<dbReference type="KEGG" id="ban:BA_4899"/>
<dbReference type="KEGG" id="bar:GBAA_4899"/>
<dbReference type="KEGG" id="bat:BAS4545"/>
<dbReference type="PATRIC" id="fig|198094.11.peg.4859"/>
<dbReference type="eggNOG" id="COG0301">
    <property type="taxonomic scope" value="Bacteria"/>
</dbReference>
<dbReference type="HOGENOM" id="CLU_037952_4_0_9"/>
<dbReference type="OMA" id="SMPEFCG"/>
<dbReference type="UniPathway" id="UPA00060"/>
<dbReference type="EvolutionaryTrace" id="Q81KU0"/>
<dbReference type="Proteomes" id="UP000000427">
    <property type="component" value="Chromosome"/>
</dbReference>
<dbReference type="Proteomes" id="UP000000594">
    <property type="component" value="Chromosome"/>
</dbReference>
<dbReference type="GO" id="GO:0005829">
    <property type="term" value="C:cytosol"/>
    <property type="evidence" value="ECO:0007669"/>
    <property type="project" value="TreeGrafter"/>
</dbReference>
<dbReference type="GO" id="GO:0005524">
    <property type="term" value="F:ATP binding"/>
    <property type="evidence" value="ECO:0007669"/>
    <property type="project" value="UniProtKB-UniRule"/>
</dbReference>
<dbReference type="GO" id="GO:0004810">
    <property type="term" value="F:CCA tRNA nucleotidyltransferase activity"/>
    <property type="evidence" value="ECO:0007669"/>
    <property type="project" value="InterPro"/>
</dbReference>
<dbReference type="GO" id="GO:0000049">
    <property type="term" value="F:tRNA binding"/>
    <property type="evidence" value="ECO:0007669"/>
    <property type="project" value="UniProtKB-UniRule"/>
</dbReference>
<dbReference type="GO" id="GO:0140741">
    <property type="term" value="F:tRNA-uracil-4 sulfurtransferase activity"/>
    <property type="evidence" value="ECO:0007669"/>
    <property type="project" value="UniProtKB-EC"/>
</dbReference>
<dbReference type="GO" id="GO:0009228">
    <property type="term" value="P:thiamine biosynthetic process"/>
    <property type="evidence" value="ECO:0007669"/>
    <property type="project" value="UniProtKB-KW"/>
</dbReference>
<dbReference type="GO" id="GO:0009229">
    <property type="term" value="P:thiamine diphosphate biosynthetic process"/>
    <property type="evidence" value="ECO:0007669"/>
    <property type="project" value="UniProtKB-UniRule"/>
</dbReference>
<dbReference type="GO" id="GO:0052837">
    <property type="term" value="P:thiazole biosynthetic process"/>
    <property type="evidence" value="ECO:0007669"/>
    <property type="project" value="TreeGrafter"/>
</dbReference>
<dbReference type="GO" id="GO:0002937">
    <property type="term" value="P:tRNA 4-thiouridine biosynthesis"/>
    <property type="evidence" value="ECO:0007669"/>
    <property type="project" value="TreeGrafter"/>
</dbReference>
<dbReference type="CDD" id="cd01712">
    <property type="entry name" value="PPase_ThiI"/>
    <property type="match status" value="1"/>
</dbReference>
<dbReference type="CDD" id="cd11716">
    <property type="entry name" value="THUMP_ThiI"/>
    <property type="match status" value="1"/>
</dbReference>
<dbReference type="FunFam" id="3.30.2130.30:FF:000003">
    <property type="entry name" value="Probable tRNA sulfurtransferase"/>
    <property type="match status" value="1"/>
</dbReference>
<dbReference type="FunFam" id="3.40.50.620:FF:000053">
    <property type="entry name" value="Probable tRNA sulfurtransferase"/>
    <property type="match status" value="1"/>
</dbReference>
<dbReference type="Gene3D" id="3.30.2130.30">
    <property type="match status" value="1"/>
</dbReference>
<dbReference type="Gene3D" id="3.40.50.620">
    <property type="entry name" value="HUPs"/>
    <property type="match status" value="1"/>
</dbReference>
<dbReference type="HAMAP" id="MF_00021">
    <property type="entry name" value="ThiI"/>
    <property type="match status" value="1"/>
</dbReference>
<dbReference type="InterPro" id="IPR014729">
    <property type="entry name" value="Rossmann-like_a/b/a_fold"/>
</dbReference>
<dbReference type="InterPro" id="IPR020536">
    <property type="entry name" value="ThiI_AANH"/>
</dbReference>
<dbReference type="InterPro" id="IPR054173">
    <property type="entry name" value="ThiI_fer"/>
</dbReference>
<dbReference type="InterPro" id="IPR049961">
    <property type="entry name" value="ThiI_N"/>
</dbReference>
<dbReference type="InterPro" id="IPR004114">
    <property type="entry name" value="THUMP_dom"/>
</dbReference>
<dbReference type="InterPro" id="IPR049962">
    <property type="entry name" value="THUMP_ThiI"/>
</dbReference>
<dbReference type="InterPro" id="IPR003720">
    <property type="entry name" value="tRNA_STrfase"/>
</dbReference>
<dbReference type="InterPro" id="IPR050102">
    <property type="entry name" value="tRNA_sulfurtransferase_ThiI"/>
</dbReference>
<dbReference type="NCBIfam" id="TIGR00342">
    <property type="entry name" value="tRNA uracil 4-sulfurtransferase ThiI"/>
    <property type="match status" value="1"/>
</dbReference>
<dbReference type="PANTHER" id="PTHR43209">
    <property type="entry name" value="TRNA SULFURTRANSFERASE"/>
    <property type="match status" value="1"/>
</dbReference>
<dbReference type="PANTHER" id="PTHR43209:SF1">
    <property type="entry name" value="TRNA SULFURTRANSFERASE"/>
    <property type="match status" value="1"/>
</dbReference>
<dbReference type="Pfam" id="PF02568">
    <property type="entry name" value="ThiI"/>
    <property type="match status" value="1"/>
</dbReference>
<dbReference type="Pfam" id="PF22025">
    <property type="entry name" value="ThiI_fer"/>
    <property type="match status" value="1"/>
</dbReference>
<dbReference type="Pfam" id="PF02926">
    <property type="entry name" value="THUMP"/>
    <property type="match status" value="1"/>
</dbReference>
<dbReference type="SMART" id="SM00981">
    <property type="entry name" value="THUMP"/>
    <property type="match status" value="1"/>
</dbReference>
<dbReference type="SUPFAM" id="SSF52402">
    <property type="entry name" value="Adenine nucleotide alpha hydrolases-like"/>
    <property type="match status" value="1"/>
</dbReference>
<dbReference type="SUPFAM" id="SSF143437">
    <property type="entry name" value="THUMP domain-like"/>
    <property type="match status" value="1"/>
</dbReference>
<dbReference type="PROSITE" id="PS51165">
    <property type="entry name" value="THUMP"/>
    <property type="match status" value="1"/>
</dbReference>
<accession>Q81KU0</accession>
<accession>Q6HS96</accession>
<accession>Q6KLJ3</accession>
<gene>
    <name type="primary">thiI</name>
    <name type="ordered locus">BA_4899</name>
    <name type="ordered locus">GBAA_4899</name>
    <name type="ordered locus">BAS4545</name>
</gene>
<organism>
    <name type="scientific">Bacillus anthracis</name>
    <dbReference type="NCBI Taxonomy" id="1392"/>
    <lineage>
        <taxon>Bacteria</taxon>
        <taxon>Bacillati</taxon>
        <taxon>Bacillota</taxon>
        <taxon>Bacilli</taxon>
        <taxon>Bacillales</taxon>
        <taxon>Bacillaceae</taxon>
        <taxon>Bacillus</taxon>
        <taxon>Bacillus cereus group</taxon>
    </lineage>
</organism>
<comment type="function">
    <text evidence="1">Catalyzes the ATP-dependent transfer of a sulfur to tRNA to produce 4-thiouridine in position 8 of tRNAs, which functions as a near-UV photosensor. Also catalyzes the transfer of sulfur to the sulfur carrier protein ThiS, forming ThiS-thiocarboxylate. This is a step in the synthesis of thiazole, in the thiamine biosynthesis pathway. The sulfur is donated as persulfide by IscS (By similarity).</text>
</comment>
<comment type="catalytic activity">
    <reaction>
        <text>[ThiI sulfur-carrier protein]-S-sulfanyl-L-cysteine + a uridine in tRNA + 2 reduced [2Fe-2S]-[ferredoxin] + ATP + H(+) = [ThiI sulfur-carrier protein]-L-cysteine + a 4-thiouridine in tRNA + 2 oxidized [2Fe-2S]-[ferredoxin] + AMP + diphosphate</text>
        <dbReference type="Rhea" id="RHEA:24176"/>
        <dbReference type="Rhea" id="RHEA-COMP:10000"/>
        <dbReference type="Rhea" id="RHEA-COMP:10001"/>
        <dbReference type="Rhea" id="RHEA-COMP:13337"/>
        <dbReference type="Rhea" id="RHEA-COMP:13338"/>
        <dbReference type="Rhea" id="RHEA-COMP:13339"/>
        <dbReference type="Rhea" id="RHEA-COMP:13340"/>
        <dbReference type="ChEBI" id="CHEBI:15378"/>
        <dbReference type="ChEBI" id="CHEBI:29950"/>
        <dbReference type="ChEBI" id="CHEBI:30616"/>
        <dbReference type="ChEBI" id="CHEBI:33019"/>
        <dbReference type="ChEBI" id="CHEBI:33737"/>
        <dbReference type="ChEBI" id="CHEBI:33738"/>
        <dbReference type="ChEBI" id="CHEBI:61963"/>
        <dbReference type="ChEBI" id="CHEBI:65315"/>
        <dbReference type="ChEBI" id="CHEBI:136798"/>
        <dbReference type="ChEBI" id="CHEBI:456215"/>
        <dbReference type="EC" id="2.8.1.4"/>
    </reaction>
</comment>
<comment type="catalytic activity">
    <reaction>
        <text>[ThiS sulfur-carrier protein]-C-terminal Gly-Gly-AMP + S-sulfanyl-L-cysteinyl-[cysteine desulfurase] + AH2 = [ThiS sulfur-carrier protein]-C-terminal-Gly-aminoethanethioate + L-cysteinyl-[cysteine desulfurase] + A + AMP + 2 H(+)</text>
        <dbReference type="Rhea" id="RHEA:43340"/>
        <dbReference type="Rhea" id="RHEA-COMP:12157"/>
        <dbReference type="Rhea" id="RHEA-COMP:12158"/>
        <dbReference type="Rhea" id="RHEA-COMP:12910"/>
        <dbReference type="Rhea" id="RHEA-COMP:19908"/>
        <dbReference type="ChEBI" id="CHEBI:13193"/>
        <dbReference type="ChEBI" id="CHEBI:15378"/>
        <dbReference type="ChEBI" id="CHEBI:17499"/>
        <dbReference type="ChEBI" id="CHEBI:29950"/>
        <dbReference type="ChEBI" id="CHEBI:61963"/>
        <dbReference type="ChEBI" id="CHEBI:90618"/>
        <dbReference type="ChEBI" id="CHEBI:232372"/>
        <dbReference type="ChEBI" id="CHEBI:456215"/>
    </reaction>
</comment>
<comment type="pathway">
    <text>Cofactor biosynthesis; thiamine diphosphate biosynthesis.</text>
</comment>
<comment type="subcellular location">
    <subcellularLocation>
        <location evidence="1">Cytoplasm</location>
    </subcellularLocation>
</comment>
<comment type="similarity">
    <text evidence="2">Belongs to the ThiI family.</text>
</comment>
<comment type="sequence caution" evidence="2">
    <conflict type="erroneous initiation">
        <sequence resource="EMBL-CDS" id="AAT56842"/>
    </conflict>
</comment>
<name>THII_BACAN</name>
<feature type="chain" id="PRO_0000154830" description="Probable tRNA sulfurtransferase">
    <location>
        <begin position="1"/>
        <end position="403"/>
    </location>
</feature>
<feature type="domain" description="THUMP">
    <location>
        <begin position="60"/>
        <end position="165"/>
    </location>
</feature>
<feature type="binding site">
    <location>
        <begin position="183"/>
        <end position="184"/>
    </location>
    <ligand>
        <name>ATP</name>
        <dbReference type="ChEBI" id="CHEBI:30616"/>
    </ligand>
</feature>
<feature type="binding site">
    <location>
        <begin position="208"/>
        <end position="209"/>
    </location>
    <ligand>
        <name>ATP</name>
        <dbReference type="ChEBI" id="CHEBI:30616"/>
    </ligand>
</feature>
<feature type="binding site">
    <location>
        <position position="265"/>
    </location>
    <ligand>
        <name>ATP</name>
        <dbReference type="ChEBI" id="CHEBI:30616"/>
    </ligand>
</feature>
<feature type="binding site">
    <location>
        <position position="287"/>
    </location>
    <ligand>
        <name>ATP</name>
        <dbReference type="ChEBI" id="CHEBI:30616"/>
    </ligand>
</feature>
<feature type="binding site">
    <location>
        <position position="296"/>
    </location>
    <ligand>
        <name>ATP</name>
        <dbReference type="ChEBI" id="CHEBI:30616"/>
    </ligand>
</feature>
<feature type="strand" evidence="3">
    <location>
        <begin position="5"/>
        <end position="10"/>
    </location>
</feature>
<feature type="helix" evidence="3">
    <location>
        <begin position="18"/>
        <end position="34"/>
    </location>
</feature>
<feature type="turn" evidence="3">
    <location>
        <begin position="35"/>
        <end position="37"/>
    </location>
</feature>
<feature type="strand" evidence="3">
    <location>
        <begin position="42"/>
        <end position="45"/>
    </location>
</feature>
<feature type="strand" evidence="3">
    <location>
        <begin position="50"/>
        <end position="53"/>
    </location>
</feature>
<feature type="helix" evidence="3">
    <location>
        <begin position="59"/>
        <end position="66"/>
    </location>
</feature>
<feature type="strand" evidence="3">
    <location>
        <begin position="72"/>
        <end position="84"/>
    </location>
</feature>
<feature type="helix" evidence="3">
    <location>
        <begin position="85"/>
        <end position="97"/>
    </location>
</feature>
<feature type="strand" evidence="3">
    <location>
        <begin position="105"/>
        <end position="112"/>
    </location>
</feature>
<feature type="helix" evidence="3">
    <location>
        <begin position="121"/>
        <end position="133"/>
    </location>
</feature>
<feature type="strand" evidence="3">
    <location>
        <begin position="136"/>
        <end position="138"/>
    </location>
</feature>
<feature type="strand" evidence="3">
    <location>
        <begin position="143"/>
        <end position="145"/>
    </location>
</feature>
<feature type="strand" evidence="3">
    <location>
        <begin position="147"/>
        <end position="154"/>
    </location>
</feature>
<feature type="strand" evidence="3">
    <location>
        <begin position="156"/>
        <end position="167"/>
    </location>
</feature>
<feature type="turn" evidence="3">
    <location>
        <begin position="174"/>
        <end position="177"/>
    </location>
</feature>
<feature type="strand" evidence="3">
    <location>
        <begin position="179"/>
        <end position="183"/>
    </location>
</feature>
<feature type="strand" evidence="3">
    <location>
        <begin position="186"/>
        <end position="188"/>
    </location>
</feature>
<feature type="helix" evidence="3">
    <location>
        <begin position="189"/>
        <end position="199"/>
    </location>
</feature>
<feature type="strand" evidence="3">
    <location>
        <begin position="203"/>
        <end position="210"/>
    </location>
</feature>
<feature type="turn" evidence="3">
    <location>
        <begin position="212"/>
        <end position="214"/>
    </location>
</feature>
<feature type="helix" evidence="3">
    <location>
        <begin position="217"/>
        <end position="230"/>
    </location>
</feature>
<feature type="helix" evidence="3">
    <location>
        <begin position="231"/>
        <end position="233"/>
    </location>
</feature>
<feature type="strand" evidence="3">
    <location>
        <begin position="237"/>
        <end position="243"/>
    </location>
</feature>
<feature type="helix" evidence="3">
    <location>
        <begin position="245"/>
        <end position="254"/>
    </location>
</feature>
<feature type="helix" evidence="3">
    <location>
        <begin position="257"/>
        <end position="259"/>
    </location>
</feature>
<feature type="helix" evidence="3">
    <location>
        <begin position="260"/>
        <end position="278"/>
    </location>
</feature>
<feature type="strand" evidence="3">
    <location>
        <begin position="283"/>
        <end position="285"/>
    </location>
</feature>
<feature type="strand" evidence="3">
    <location>
        <begin position="290"/>
        <end position="292"/>
    </location>
</feature>
<feature type="helix" evidence="3">
    <location>
        <begin position="298"/>
        <end position="304"/>
    </location>
</feature>
<feature type="helix" evidence="3">
    <location>
        <begin position="305"/>
        <end position="307"/>
    </location>
</feature>
<feature type="turn" evidence="3">
    <location>
        <begin position="315"/>
        <end position="318"/>
    </location>
</feature>
<feature type="helix" evidence="3">
    <location>
        <begin position="321"/>
        <end position="330"/>
    </location>
</feature>
<feature type="helix" evidence="3">
    <location>
        <begin position="334"/>
        <end position="337"/>
    </location>
</feature>
<feature type="helix" evidence="3">
    <location>
        <begin position="359"/>
        <end position="366"/>
    </location>
</feature>
<feature type="helix" evidence="3">
    <location>
        <begin position="372"/>
        <end position="381"/>
    </location>
</feature>
<feature type="strand" evidence="3">
    <location>
        <begin position="383"/>
        <end position="387"/>
    </location>
</feature>
<reference key="1">
    <citation type="journal article" date="2003" name="Nature">
        <title>The genome sequence of Bacillus anthracis Ames and comparison to closely related bacteria.</title>
        <authorList>
            <person name="Read T.D."/>
            <person name="Peterson S.N."/>
            <person name="Tourasse N.J."/>
            <person name="Baillie L.W."/>
            <person name="Paulsen I.T."/>
            <person name="Nelson K.E."/>
            <person name="Tettelin H."/>
            <person name="Fouts D.E."/>
            <person name="Eisen J.A."/>
            <person name="Gill S.R."/>
            <person name="Holtzapple E.K."/>
            <person name="Okstad O.A."/>
            <person name="Helgason E."/>
            <person name="Rilstone J."/>
            <person name="Wu M."/>
            <person name="Kolonay J.F."/>
            <person name="Beanan M.J."/>
            <person name="Dodson R.J."/>
            <person name="Brinkac L.M."/>
            <person name="Gwinn M.L."/>
            <person name="DeBoy R.T."/>
            <person name="Madpu R."/>
            <person name="Daugherty S.C."/>
            <person name="Durkin A.S."/>
            <person name="Haft D.H."/>
            <person name="Nelson W.C."/>
            <person name="Peterson J.D."/>
            <person name="Pop M."/>
            <person name="Khouri H.M."/>
            <person name="Radune D."/>
            <person name="Benton J.L."/>
            <person name="Mahamoud Y."/>
            <person name="Jiang L."/>
            <person name="Hance I.R."/>
            <person name="Weidman J.F."/>
            <person name="Berry K.J."/>
            <person name="Plaut R.D."/>
            <person name="Wolf A.M."/>
            <person name="Watkins K.L."/>
            <person name="Nierman W.C."/>
            <person name="Hazen A."/>
            <person name="Cline R.T."/>
            <person name="Redmond C."/>
            <person name="Thwaite J.E."/>
            <person name="White O."/>
            <person name="Salzberg S.L."/>
            <person name="Thomason B."/>
            <person name="Friedlander A.M."/>
            <person name="Koehler T.M."/>
            <person name="Hanna P.C."/>
            <person name="Kolstoe A.-B."/>
            <person name="Fraser C.M."/>
        </authorList>
    </citation>
    <scope>NUCLEOTIDE SEQUENCE [LARGE SCALE GENOMIC DNA]</scope>
    <source>
        <strain>Ames / isolate Porton</strain>
    </source>
</reference>
<reference key="2">
    <citation type="journal article" date="2009" name="J. Bacteriol.">
        <title>The complete genome sequence of Bacillus anthracis Ames 'Ancestor'.</title>
        <authorList>
            <person name="Ravel J."/>
            <person name="Jiang L."/>
            <person name="Stanley S.T."/>
            <person name="Wilson M.R."/>
            <person name="Decker R.S."/>
            <person name="Read T.D."/>
            <person name="Worsham P."/>
            <person name="Keim P.S."/>
            <person name="Salzberg S.L."/>
            <person name="Fraser-Liggett C.M."/>
            <person name="Rasko D.A."/>
        </authorList>
    </citation>
    <scope>NUCLEOTIDE SEQUENCE [LARGE SCALE GENOMIC DNA]</scope>
    <source>
        <strain>Ames ancestor</strain>
    </source>
</reference>
<reference key="3">
    <citation type="submission" date="2004-01" db="EMBL/GenBank/DDBJ databases">
        <title>Complete genome sequence of Bacillus anthracis Sterne.</title>
        <authorList>
            <person name="Brettin T.S."/>
            <person name="Bruce D."/>
            <person name="Challacombe J.F."/>
            <person name="Gilna P."/>
            <person name="Han C."/>
            <person name="Hill K."/>
            <person name="Hitchcock P."/>
            <person name="Jackson P."/>
            <person name="Keim P."/>
            <person name="Longmire J."/>
            <person name="Lucas S."/>
            <person name="Okinaka R."/>
            <person name="Richardson P."/>
            <person name="Rubin E."/>
            <person name="Tice H."/>
        </authorList>
    </citation>
    <scope>NUCLEOTIDE SEQUENCE [LARGE SCALE GENOMIC DNA]</scope>
    <source>
        <strain>Sterne</strain>
    </source>
</reference>
<reference key="4">
    <citation type="journal article" date="2006" name="J. Mol. Biol.">
        <title>Crystal structure of Bacillus anthracis ThiI, a tRNA-modifying enzyme containing the predicted RNA-binding THUMP domain.</title>
        <authorList>
            <person name="Waterman D.G."/>
            <person name="Ortiz-Lombardia M."/>
            <person name="Fogg M.J."/>
            <person name="Koonin E.V."/>
            <person name="Antson A.A."/>
        </authorList>
    </citation>
    <scope>X-RAY CRYSTALLOGRAPHY (2.5 ANGSTROMS) IN COMPLEX WITH AMP</scope>
</reference>
<evidence type="ECO:0000250" key="1"/>
<evidence type="ECO:0000305" key="2"/>
<evidence type="ECO:0007829" key="3">
    <source>
        <dbReference type="PDB" id="2C5S"/>
    </source>
</evidence>
<sequence>MTYEYILVRYGEMTTKGKNRSKFVSTLKDNVKFKLKKFPNIKIDATHDRMYIQLNGEDHEAVSERLKDVFGIHKFNLAMKVPSELEDIKKGALAAFLQVKGDVKTFKITVHRSYKHFPMRTMELLPEIGGHILENTEDITVDVHNPDVNVRVEIRSGYSYIMCDERMGAGGLPVGVGGKVMVLLSGGIDSPVAAYLTMKRGVSVEAVHFHSPPFTSERAKQKVIDLAQELTKYCKRVTLHLVPFTEVQKTINKEIPSSYSMTVMRRMMMRITERIAEERNALAITTGESLGQVASQTLDSMHTINEVTNYPVIRPLITMDKLEIIKIAEEIGTYDISIRPYEDCCTVFTPASPATKPKREKANRFEAKYDFTPLIDEAVANKETMVLQTVEVVAEEEKFEELF</sequence>